<organism>
    <name type="scientific">Burkholderia lata (strain ATCC 17760 / DSM 23089 / LMG 22485 / NCIMB 9086 / R18194 / 383)</name>
    <dbReference type="NCBI Taxonomy" id="482957"/>
    <lineage>
        <taxon>Bacteria</taxon>
        <taxon>Pseudomonadati</taxon>
        <taxon>Pseudomonadota</taxon>
        <taxon>Betaproteobacteria</taxon>
        <taxon>Burkholderiales</taxon>
        <taxon>Burkholderiaceae</taxon>
        <taxon>Burkholderia</taxon>
        <taxon>Burkholderia cepacia complex</taxon>
    </lineage>
</organism>
<evidence type="ECO:0000255" key="1">
    <source>
        <dbReference type="HAMAP-Rule" id="MF_00096"/>
    </source>
</evidence>
<reference key="1">
    <citation type="submission" date="2005-10" db="EMBL/GenBank/DDBJ databases">
        <title>Complete sequence of chromosome 1 of Burkholderia sp. 383.</title>
        <authorList>
            <consortium name="US DOE Joint Genome Institute"/>
            <person name="Copeland A."/>
            <person name="Lucas S."/>
            <person name="Lapidus A."/>
            <person name="Barry K."/>
            <person name="Detter J.C."/>
            <person name="Glavina T."/>
            <person name="Hammon N."/>
            <person name="Israni S."/>
            <person name="Pitluck S."/>
            <person name="Chain P."/>
            <person name="Malfatti S."/>
            <person name="Shin M."/>
            <person name="Vergez L."/>
            <person name="Schmutz J."/>
            <person name="Larimer F."/>
            <person name="Land M."/>
            <person name="Kyrpides N."/>
            <person name="Lykidis A."/>
            <person name="Richardson P."/>
        </authorList>
    </citation>
    <scope>NUCLEOTIDE SEQUENCE [LARGE SCALE GENOMIC DNA]</scope>
    <source>
        <strain>ATCC 17760 / DSM 23089 / LMG 22485 / NCIMB 9086 / R18194 / 383</strain>
    </source>
</reference>
<gene>
    <name evidence="1" type="primary">mutS</name>
    <name type="ordered locus">Bcep18194_A5394</name>
</gene>
<comment type="function">
    <text evidence="1">This protein is involved in the repair of mismatches in DNA. It is possible that it carries out the mismatch recognition step. This protein has a weak ATPase activity.</text>
</comment>
<comment type="similarity">
    <text evidence="1">Belongs to the DNA mismatch repair MutS family.</text>
</comment>
<protein>
    <recommendedName>
        <fullName evidence="1">DNA mismatch repair protein MutS</fullName>
    </recommendedName>
</protein>
<name>MUTS_BURL3</name>
<sequence>MTTLSPDAFAGHTPMMQQYLRIKADHPDTLVFYRMGDFYELFFEDAAKAARLLDLTLTQRGASAGTPIKMAGVPHHAVEQYLAKLVKMGESVAICEQIGDPATSKGPVERKVVRVVTPGTLTDAALLSDKNDVYLLAMCTGHNKRGVAVNIGLAWLNLASGALRLAEIEPDQLAAALERIRPAEILTPDGATDAVPAGAGASKRVPAWHFDIASGTQRLCDQLDVASLDGFGAHSLTSACGAAGALLLYAAATQGQQLRHVRSLKVENETEYIGLDPATRRNLELTETLRGTESPTLYSLLDTCCTTMGSRLLRHWLHHPPRASVAAQSRQQAIGALLDAPANASLDALRSALRQIADVERITGRLALLSARPRDLSSLRDTFAALPALRERISAIVANADSLTRVDAALAPPAECLDLLTSAIAPEPAAMVRDGGVIARGYDAELDELRDISENCGQFLIDLEARERTRTGIANLRVEYNKVHGFYIEVTRGQTDKVPDDYRRRQTLKNAERYITPELKTFEDKALSAQERALARERALYDAVLQALLPFIPECQRVASALAELDLLAAFAERASALDWVAPTFTDEIGIEIEQGRHPVVEAQVEQFIANDCRFGTERKLLLITGPNMGGKSTFMRQTALIALMAYVGSYVPAKSACFGPIDRIFTRIGAADDLAGGRSTFMVEMTEAAAILNDATPQSLVLMDEIGRGTSTFDGLALAWAIARHLLAHNACYTLFATHYFELTQLPAEFPQAANVHLSAVEHGHGIVFLHAVNEGPANQSYGLQVAQLAGVPAPVIRAARKHLAYLEQQSASQHTPQLDLFSAPPVAADDLECADAPALPDTPHPALEKLRDIDPDDLKPREALDLLYELRTLVRSHDADGHA</sequence>
<dbReference type="EMBL" id="CP000151">
    <property type="protein sequence ID" value="ABB08988.1"/>
    <property type="molecule type" value="Genomic_DNA"/>
</dbReference>
<dbReference type="RefSeq" id="WP_011352525.1">
    <property type="nucleotide sequence ID" value="NC_007510.1"/>
</dbReference>
<dbReference type="SMR" id="Q39EX8"/>
<dbReference type="GeneID" id="45095276"/>
<dbReference type="KEGG" id="bur:Bcep18194_A5394"/>
<dbReference type="PATRIC" id="fig|482957.22.peg.2346"/>
<dbReference type="HOGENOM" id="CLU_002472_4_1_4"/>
<dbReference type="Proteomes" id="UP000002705">
    <property type="component" value="Chromosome 1"/>
</dbReference>
<dbReference type="GO" id="GO:0005829">
    <property type="term" value="C:cytosol"/>
    <property type="evidence" value="ECO:0007669"/>
    <property type="project" value="TreeGrafter"/>
</dbReference>
<dbReference type="GO" id="GO:0005524">
    <property type="term" value="F:ATP binding"/>
    <property type="evidence" value="ECO:0007669"/>
    <property type="project" value="UniProtKB-UniRule"/>
</dbReference>
<dbReference type="GO" id="GO:0140664">
    <property type="term" value="F:ATP-dependent DNA damage sensor activity"/>
    <property type="evidence" value="ECO:0007669"/>
    <property type="project" value="InterPro"/>
</dbReference>
<dbReference type="GO" id="GO:0003684">
    <property type="term" value="F:damaged DNA binding"/>
    <property type="evidence" value="ECO:0007669"/>
    <property type="project" value="UniProtKB-UniRule"/>
</dbReference>
<dbReference type="GO" id="GO:0030983">
    <property type="term" value="F:mismatched DNA binding"/>
    <property type="evidence" value="ECO:0007669"/>
    <property type="project" value="InterPro"/>
</dbReference>
<dbReference type="GO" id="GO:0006298">
    <property type="term" value="P:mismatch repair"/>
    <property type="evidence" value="ECO:0007669"/>
    <property type="project" value="UniProtKB-UniRule"/>
</dbReference>
<dbReference type="CDD" id="cd03284">
    <property type="entry name" value="ABC_MutS1"/>
    <property type="match status" value="1"/>
</dbReference>
<dbReference type="FunFam" id="3.40.1170.10:FF:000001">
    <property type="entry name" value="DNA mismatch repair protein MutS"/>
    <property type="match status" value="1"/>
</dbReference>
<dbReference type="FunFam" id="3.40.50.300:FF:000870">
    <property type="entry name" value="MutS protein homolog 4"/>
    <property type="match status" value="1"/>
</dbReference>
<dbReference type="Gene3D" id="1.10.1420.10">
    <property type="match status" value="2"/>
</dbReference>
<dbReference type="Gene3D" id="6.10.140.430">
    <property type="match status" value="1"/>
</dbReference>
<dbReference type="Gene3D" id="3.40.1170.10">
    <property type="entry name" value="DNA repair protein MutS, domain I"/>
    <property type="match status" value="1"/>
</dbReference>
<dbReference type="Gene3D" id="3.30.420.110">
    <property type="entry name" value="MutS, connector domain"/>
    <property type="match status" value="1"/>
</dbReference>
<dbReference type="Gene3D" id="3.40.50.300">
    <property type="entry name" value="P-loop containing nucleotide triphosphate hydrolases"/>
    <property type="match status" value="1"/>
</dbReference>
<dbReference type="HAMAP" id="MF_00096">
    <property type="entry name" value="MutS"/>
    <property type="match status" value="1"/>
</dbReference>
<dbReference type="InterPro" id="IPR005748">
    <property type="entry name" value="DNA_mismatch_repair_MutS"/>
</dbReference>
<dbReference type="InterPro" id="IPR007695">
    <property type="entry name" value="DNA_mismatch_repair_MutS-lik_N"/>
</dbReference>
<dbReference type="InterPro" id="IPR017261">
    <property type="entry name" value="DNA_mismatch_repair_MutS/MSH"/>
</dbReference>
<dbReference type="InterPro" id="IPR000432">
    <property type="entry name" value="DNA_mismatch_repair_MutS_C"/>
</dbReference>
<dbReference type="InterPro" id="IPR007861">
    <property type="entry name" value="DNA_mismatch_repair_MutS_clamp"/>
</dbReference>
<dbReference type="InterPro" id="IPR007696">
    <property type="entry name" value="DNA_mismatch_repair_MutS_core"/>
</dbReference>
<dbReference type="InterPro" id="IPR016151">
    <property type="entry name" value="DNA_mismatch_repair_MutS_N"/>
</dbReference>
<dbReference type="InterPro" id="IPR036187">
    <property type="entry name" value="DNA_mismatch_repair_MutS_sf"/>
</dbReference>
<dbReference type="InterPro" id="IPR007860">
    <property type="entry name" value="DNA_mmatch_repair_MutS_con_dom"/>
</dbReference>
<dbReference type="InterPro" id="IPR045076">
    <property type="entry name" value="MutS"/>
</dbReference>
<dbReference type="InterPro" id="IPR036678">
    <property type="entry name" value="MutS_con_dom_sf"/>
</dbReference>
<dbReference type="InterPro" id="IPR027417">
    <property type="entry name" value="P-loop_NTPase"/>
</dbReference>
<dbReference type="NCBIfam" id="TIGR01070">
    <property type="entry name" value="mutS1"/>
    <property type="match status" value="1"/>
</dbReference>
<dbReference type="NCBIfam" id="NF003810">
    <property type="entry name" value="PRK05399.1"/>
    <property type="match status" value="1"/>
</dbReference>
<dbReference type="PANTHER" id="PTHR11361:SF34">
    <property type="entry name" value="DNA MISMATCH REPAIR PROTEIN MSH1, MITOCHONDRIAL"/>
    <property type="match status" value="1"/>
</dbReference>
<dbReference type="PANTHER" id="PTHR11361">
    <property type="entry name" value="DNA MISMATCH REPAIR PROTEIN MUTS FAMILY MEMBER"/>
    <property type="match status" value="1"/>
</dbReference>
<dbReference type="Pfam" id="PF01624">
    <property type="entry name" value="MutS_I"/>
    <property type="match status" value="1"/>
</dbReference>
<dbReference type="Pfam" id="PF05188">
    <property type="entry name" value="MutS_II"/>
    <property type="match status" value="1"/>
</dbReference>
<dbReference type="Pfam" id="PF05192">
    <property type="entry name" value="MutS_III"/>
    <property type="match status" value="1"/>
</dbReference>
<dbReference type="Pfam" id="PF05190">
    <property type="entry name" value="MutS_IV"/>
    <property type="match status" value="1"/>
</dbReference>
<dbReference type="Pfam" id="PF00488">
    <property type="entry name" value="MutS_V"/>
    <property type="match status" value="1"/>
</dbReference>
<dbReference type="PIRSF" id="PIRSF037677">
    <property type="entry name" value="DNA_mis_repair_Msh6"/>
    <property type="match status" value="1"/>
</dbReference>
<dbReference type="SMART" id="SM00534">
    <property type="entry name" value="MUTSac"/>
    <property type="match status" value="1"/>
</dbReference>
<dbReference type="SMART" id="SM00533">
    <property type="entry name" value="MUTSd"/>
    <property type="match status" value="1"/>
</dbReference>
<dbReference type="SUPFAM" id="SSF55271">
    <property type="entry name" value="DNA repair protein MutS, domain I"/>
    <property type="match status" value="1"/>
</dbReference>
<dbReference type="SUPFAM" id="SSF53150">
    <property type="entry name" value="DNA repair protein MutS, domain II"/>
    <property type="match status" value="1"/>
</dbReference>
<dbReference type="SUPFAM" id="SSF48334">
    <property type="entry name" value="DNA repair protein MutS, domain III"/>
    <property type="match status" value="1"/>
</dbReference>
<dbReference type="SUPFAM" id="SSF52540">
    <property type="entry name" value="P-loop containing nucleoside triphosphate hydrolases"/>
    <property type="match status" value="1"/>
</dbReference>
<dbReference type="PROSITE" id="PS00486">
    <property type="entry name" value="DNA_MISMATCH_REPAIR_2"/>
    <property type="match status" value="1"/>
</dbReference>
<accession>Q39EX8</accession>
<keyword id="KW-0067">ATP-binding</keyword>
<keyword id="KW-0227">DNA damage</keyword>
<keyword id="KW-0234">DNA repair</keyword>
<keyword id="KW-0238">DNA-binding</keyword>
<keyword id="KW-0547">Nucleotide-binding</keyword>
<feature type="chain" id="PRO_0000224358" description="DNA mismatch repair protein MutS">
    <location>
        <begin position="1"/>
        <end position="885"/>
    </location>
</feature>
<feature type="binding site" evidence="1">
    <location>
        <begin position="626"/>
        <end position="633"/>
    </location>
    <ligand>
        <name>ATP</name>
        <dbReference type="ChEBI" id="CHEBI:30616"/>
    </ligand>
</feature>
<proteinExistence type="inferred from homology"/>